<organism>
    <name type="scientific">Gallus gallus</name>
    <name type="common">Chicken</name>
    <dbReference type="NCBI Taxonomy" id="9031"/>
    <lineage>
        <taxon>Eukaryota</taxon>
        <taxon>Metazoa</taxon>
        <taxon>Chordata</taxon>
        <taxon>Craniata</taxon>
        <taxon>Vertebrata</taxon>
        <taxon>Euteleostomi</taxon>
        <taxon>Archelosauria</taxon>
        <taxon>Archosauria</taxon>
        <taxon>Dinosauria</taxon>
        <taxon>Saurischia</taxon>
        <taxon>Theropoda</taxon>
        <taxon>Coelurosauria</taxon>
        <taxon>Aves</taxon>
        <taxon>Neognathae</taxon>
        <taxon>Galloanserae</taxon>
        <taxon>Galliformes</taxon>
        <taxon>Phasianidae</taxon>
        <taxon>Phasianinae</taxon>
        <taxon>Gallus</taxon>
    </lineage>
</organism>
<dbReference type="EC" id="2.3.1.43" evidence="4 5"/>
<dbReference type="EMBL" id="X91011">
    <property type="protein sequence ID" value="CAA62493.1"/>
    <property type="molecule type" value="mRNA"/>
</dbReference>
<dbReference type="PIR" id="I50662">
    <property type="entry name" value="I50662"/>
</dbReference>
<dbReference type="RefSeq" id="NP_001280023.1">
    <property type="nucleotide sequence ID" value="NM_001293094.1"/>
</dbReference>
<dbReference type="SMR" id="P53760"/>
<dbReference type="FunCoup" id="P53760">
    <property type="interactions" value="163"/>
</dbReference>
<dbReference type="STRING" id="9031.ENSGALP00000043323"/>
<dbReference type="ESTHER" id="chick-lcat">
    <property type="family name" value="PC-sterol_acyltransferase"/>
</dbReference>
<dbReference type="GlyCosmos" id="P53760">
    <property type="glycosylation" value="3 sites, No reported glycans"/>
</dbReference>
<dbReference type="GlyGen" id="P53760">
    <property type="glycosylation" value="3 sites"/>
</dbReference>
<dbReference type="PaxDb" id="9031-ENSGALP00000043323"/>
<dbReference type="GeneID" id="396136"/>
<dbReference type="KEGG" id="gga:396136"/>
<dbReference type="CTD" id="3931"/>
<dbReference type="VEuPathDB" id="HostDB:geneid_396136"/>
<dbReference type="eggNOG" id="KOG2369">
    <property type="taxonomic scope" value="Eukaryota"/>
</dbReference>
<dbReference type="InParanoid" id="P53760"/>
<dbReference type="OrthoDB" id="190846at2759"/>
<dbReference type="PhylomeDB" id="P53760"/>
<dbReference type="BRENDA" id="2.3.1.43">
    <property type="organism ID" value="1306"/>
</dbReference>
<dbReference type="Proteomes" id="UP000000539">
    <property type="component" value="Unassembled WGS sequence"/>
</dbReference>
<dbReference type="GO" id="GO:0005615">
    <property type="term" value="C:extracellular space"/>
    <property type="evidence" value="ECO:0000318"/>
    <property type="project" value="GO_Central"/>
</dbReference>
<dbReference type="GO" id="GO:0004607">
    <property type="term" value="F:phosphatidylcholine-sterol O-acyltransferase activity"/>
    <property type="evidence" value="ECO:0000250"/>
    <property type="project" value="UniProtKB"/>
</dbReference>
<dbReference type="GO" id="GO:0008203">
    <property type="term" value="P:cholesterol metabolic process"/>
    <property type="evidence" value="ECO:0000250"/>
    <property type="project" value="UniProtKB"/>
</dbReference>
<dbReference type="GO" id="GO:0006629">
    <property type="term" value="P:lipid metabolic process"/>
    <property type="evidence" value="ECO:0000318"/>
    <property type="project" value="GO_Central"/>
</dbReference>
<dbReference type="GO" id="GO:0046470">
    <property type="term" value="P:phosphatidylcholine metabolic process"/>
    <property type="evidence" value="ECO:0000250"/>
    <property type="project" value="UniProtKB"/>
</dbReference>
<dbReference type="FunFam" id="3.40.50.1820:FF:000445">
    <property type="entry name" value="Lecithin-cholesterol acyltransferase"/>
    <property type="match status" value="1"/>
</dbReference>
<dbReference type="FunFam" id="3.40.50.1820:FF:000090">
    <property type="entry name" value="Phosphatidylcholine-sterol acyltransferase"/>
    <property type="match status" value="1"/>
</dbReference>
<dbReference type="Gene3D" id="3.40.50.1820">
    <property type="entry name" value="alpha/beta hydrolase"/>
    <property type="match status" value="3"/>
</dbReference>
<dbReference type="InterPro" id="IPR029058">
    <property type="entry name" value="AB_hydrolase_fold"/>
</dbReference>
<dbReference type="InterPro" id="IPR003386">
    <property type="entry name" value="LACT/PDAT_acylTrfase"/>
</dbReference>
<dbReference type="PANTHER" id="PTHR11440">
    <property type="entry name" value="LECITHIN-CHOLESTEROL ACYLTRANSFERASE-RELATED"/>
    <property type="match status" value="1"/>
</dbReference>
<dbReference type="Pfam" id="PF02450">
    <property type="entry name" value="LCAT"/>
    <property type="match status" value="1"/>
</dbReference>
<dbReference type="SUPFAM" id="SSF53474">
    <property type="entry name" value="alpha/beta-Hydrolases"/>
    <property type="match status" value="1"/>
</dbReference>
<reference key="1">
    <citation type="journal article" date="1995" name="J. Biol. Chem.">
        <title>Chicken lecithin-cholesterol acyltransferase. Molecular characterization reveals unusual structure and expression pattern.</title>
        <authorList>
            <person name="Hengstschlaeger-Ottnad E."/>
            <person name="Kuchler K."/>
            <person name="Schneider W.J."/>
        </authorList>
    </citation>
    <scope>NUCLEOTIDE SEQUENCE [MRNA]</scope>
    <scope>CATALYTIC ACTIVITY</scope>
    <scope>SUBCELLULAR LOCATION</scope>
    <scope>TISSUE SPECIFICITY</scope>
    <scope>DEVELOPMENTAL STAGE</scope>
    <source>
        <strain>White leghorn</strain>
    </source>
</reference>
<reference key="2">
    <citation type="journal article" date="1996" name="J. Lipid Res.">
        <title>Comparative studies on the substrate specificity of lecithin:cholesterol acyltransferase towards the molecular species of phosphatidylcholine in the plasma of 14 vertebrates.</title>
        <authorList>
            <person name="Subbaiah P.V."/>
            <person name="Liu M."/>
        </authorList>
    </citation>
    <scope>CATALYTIC ACTIVITY</scope>
    <scope>FUNCTION</scope>
    <scope>SUBSTRATE SPECIFICITY</scope>
    <scope>SUBCELLULAR LOCATION</scope>
    <scope>TISSUE SPECIFICITY</scope>
</reference>
<accession>P53760</accession>
<comment type="function">
    <text evidence="2 5">Central enzyme in the extracellular metabolism of plasma lipoproteins. Synthesized mainly in the liver and secreted into plasma where it converts cholesterol and phosphatidylcholines (lecithins) to cholesteryl esters and lysophosphatidylcholines on the surface of high and low density lipoproteins (HDLs and LDLs). The cholesterol ester is then transported back to the liver. Also produced in the brain by primary astrocytes, and esterifies free cholesterol on nascent APOE-containing lipoproteins secreted from glia and influences cerebral spinal fluid (CSF) APOE- and APOA1 levels. Together with APOE and the cholesterol transporter ABCA1, plays a key role in the maturation of glial-derived, nascent lipoproteins. Required for remodeling high-density lipoprotein particles into their spherical forms (By similarity). Has a preference for plasma 16:0-18:2 or 18:O-18:2 phosphatidylcholines (PubMed:8820107).</text>
</comment>
<comment type="catalytic activity">
    <reaction evidence="4 5">
        <text>a sterol + a 1,2-diacyl-sn-glycero-3-phosphocholine = a sterol ester + a 1-acyl-sn-glycero-3-phosphocholine</text>
        <dbReference type="Rhea" id="RHEA:21204"/>
        <dbReference type="ChEBI" id="CHEBI:15889"/>
        <dbReference type="ChEBI" id="CHEBI:35915"/>
        <dbReference type="ChEBI" id="CHEBI:57643"/>
        <dbReference type="ChEBI" id="CHEBI:58168"/>
        <dbReference type="EC" id="2.3.1.43"/>
    </reaction>
</comment>
<comment type="activity regulation">
    <text evidence="1">APOA1 is the most potent activator in plasma. Also activated by APOE, APOC1 and APOA4 (By similarity).</text>
</comment>
<comment type="subcellular location">
    <subcellularLocation>
        <location evidence="4 5">Secreted</location>
    </subcellularLocation>
    <text evidence="4 5">Secreted into blood plasma (PubMed:7592817, PubMed:8820107).</text>
</comment>
<comment type="tissue specificity">
    <text evidence="4 5">Detected in blood plasma (at protein level) (PubMed:7592817, PubMed:8820107). Expressed in liver, brain and adrenal glands. Lower expression in testes. In laying hens, expressed higher in brain than in liver. In roosters, higher levels in liver than in brain (PubMed:7592817).</text>
</comment>
<comment type="developmental stage">
    <text evidence="4">Expressed in liver during embryogenesis. Levels higher in liver than in brain up to 15 weeks after hatching. In the brain, first detected at 11 weeks after hatching and increasing levels from 15 weeks to maturity (25 weeks). Expression in the liver is much lower throughout these later stages of hatching.</text>
</comment>
<comment type="similarity">
    <text evidence="6">Belongs to the AB hydrolase superfamily. Lipase family.</text>
</comment>
<keyword id="KW-0012">Acyltransferase</keyword>
<keyword id="KW-0153">Cholesterol metabolism</keyword>
<keyword id="KW-1015">Disulfide bond</keyword>
<keyword id="KW-0325">Glycoprotein</keyword>
<keyword id="KW-0443">Lipid metabolism</keyword>
<keyword id="KW-1185">Reference proteome</keyword>
<keyword id="KW-0964">Secreted</keyword>
<keyword id="KW-0732">Signal</keyword>
<keyword id="KW-0753">Steroid metabolism</keyword>
<keyword id="KW-1207">Sterol metabolism</keyword>
<keyword id="KW-0808">Transferase</keyword>
<proteinExistence type="evidence at protein level"/>
<gene>
    <name type="primary">LCAT</name>
</gene>
<name>LCAT_CHICK</name>
<sequence length="413" mass="47804">GRTGAGFTLLTLLLLLPQPTSQFWLFNVLFPPTTTPEAPPTNSTPPWCLVPGFLGNQLEAKLDKPDVVNWMCYRKTEDYFTIWLNLNTFLPVGVDCWIDNTRVVYNRTARKMTNAPGVHIRVPGFGKTYSVEYLDQSKLAGYLHTLVQNLVNNGYVRDQTVRAAPYDWRVGPQEQPEYFQNLKALIEEMHDEYQQRVFLIGHSMGNLNVLYFLLQQKQAWKDQYIGGFISLGAPWGGSVKPLRVLASGDNQGIPLMSNIKLREEQRMTTTSPWMFPTSLAWPEDHVFISTPSYNYTYRDYQRFFTDVNLEDGWYMWEDMKDLLKGLPPPGVDTYCLYGTGYPTVETYIYDEHFPYEDPVDMIYGDGDDTVNKRSSELCKRWRNQQKQKVHVQELRGIDHLNMVFSNLTLTLHQ</sequence>
<feature type="signal peptide" evidence="3">
    <location>
        <begin position="1" status="less than"/>
        <end position="22"/>
    </location>
</feature>
<feature type="chain" id="PRO_0000017807" description="Phosphatidylcholine-sterol acyltransferase">
    <location>
        <begin position="23"/>
        <end position="413"/>
    </location>
</feature>
<feature type="active site" description="Charge relay system" evidence="1">
    <location>
        <position position="203"/>
    </location>
</feature>
<feature type="active site" description="Nucleophile" evidence="2">
    <location>
        <position position="203"/>
    </location>
</feature>
<feature type="active site" description="Charge relay system" evidence="2">
    <location>
        <position position="367"/>
    </location>
</feature>
<feature type="active site" description="Charge relay system" evidence="2">
    <location>
        <position position="399"/>
    </location>
</feature>
<feature type="glycosylation site" description="N-linked (GlcNAc...) asparagine" evidence="3">
    <location>
        <position position="106"/>
    </location>
</feature>
<feature type="glycosylation site" description="N-linked (GlcNAc...) asparagine" evidence="3">
    <location>
        <position position="294"/>
    </location>
</feature>
<feature type="glycosylation site" description="N-linked (GlcNAc...) asparagine" evidence="3">
    <location>
        <position position="406"/>
    </location>
</feature>
<feature type="disulfide bond" evidence="2">
    <location>
        <begin position="72"/>
        <end position="96"/>
    </location>
</feature>
<feature type="disulfide bond" evidence="2">
    <location>
        <begin position="335"/>
        <end position="378"/>
    </location>
</feature>
<feature type="non-terminal residue">
    <location>
        <position position="1"/>
    </location>
</feature>
<evidence type="ECO:0000250" key="1"/>
<evidence type="ECO:0000250" key="2">
    <source>
        <dbReference type="UniProtKB" id="P04180"/>
    </source>
</evidence>
<evidence type="ECO:0000255" key="3"/>
<evidence type="ECO:0000269" key="4">
    <source>
    </source>
</evidence>
<evidence type="ECO:0000269" key="5">
    <source>
    </source>
</evidence>
<evidence type="ECO:0000305" key="6"/>
<protein>
    <recommendedName>
        <fullName>Phosphatidylcholine-sterol acyltransferase</fullName>
        <ecNumber evidence="4 5">2.3.1.43</ecNumber>
    </recommendedName>
    <alternativeName>
        <fullName>Lecithin-cholesterol acyltransferase</fullName>
    </alternativeName>
    <alternativeName>
        <fullName>Phospholipid-cholesterol acyltransferase</fullName>
    </alternativeName>
</protein>